<evidence type="ECO:0000255" key="1">
    <source>
        <dbReference type="PROSITE-ProRule" id="PRU01182"/>
    </source>
</evidence>
<evidence type="ECO:0000305" key="2"/>
<feature type="chain" id="PRO_0000322691" description="UPF0758 protein HS_0144">
    <location>
        <begin position="1"/>
        <end position="222"/>
    </location>
</feature>
<feature type="domain" description="MPN" evidence="1">
    <location>
        <begin position="99"/>
        <end position="222"/>
    </location>
</feature>
<feature type="short sequence motif" description="JAMM motif" evidence="1">
    <location>
        <begin position="171"/>
        <end position="184"/>
    </location>
</feature>
<feature type="binding site" evidence="1">
    <location>
        <position position="171"/>
    </location>
    <ligand>
        <name>Zn(2+)</name>
        <dbReference type="ChEBI" id="CHEBI:29105"/>
        <note>catalytic</note>
    </ligand>
</feature>
<feature type="binding site" evidence="1">
    <location>
        <position position="173"/>
    </location>
    <ligand>
        <name>Zn(2+)</name>
        <dbReference type="ChEBI" id="CHEBI:29105"/>
        <note>catalytic</note>
    </ligand>
</feature>
<feature type="binding site" evidence="1">
    <location>
        <position position="184"/>
    </location>
    <ligand>
        <name>Zn(2+)</name>
        <dbReference type="ChEBI" id="CHEBI:29105"/>
        <note>catalytic</note>
    </ligand>
</feature>
<reference key="1">
    <citation type="journal article" date="2007" name="J. Bacteriol.">
        <title>Complete genome sequence of Haemophilus somnus (Histophilus somni) strain 129Pt and comparison to Haemophilus ducreyi 35000HP and Haemophilus influenzae Rd.</title>
        <authorList>
            <person name="Challacombe J.F."/>
            <person name="Duncan A.J."/>
            <person name="Brettin T.S."/>
            <person name="Bruce D."/>
            <person name="Chertkov O."/>
            <person name="Detter J.C."/>
            <person name="Han C.S."/>
            <person name="Misra M."/>
            <person name="Richardson P."/>
            <person name="Tapia R."/>
            <person name="Thayer N."/>
            <person name="Xie G."/>
            <person name="Inzana T.J."/>
        </authorList>
    </citation>
    <scope>NUCLEOTIDE SEQUENCE [LARGE SCALE GENOMIC DNA]</scope>
    <source>
        <strain>129Pt</strain>
    </source>
</reference>
<name>Y144_HISS1</name>
<protein>
    <recommendedName>
        <fullName>UPF0758 protein HS_0144</fullName>
    </recommendedName>
</protein>
<organism>
    <name type="scientific">Histophilus somni (strain 129Pt)</name>
    <name type="common">Haemophilus somnus</name>
    <dbReference type="NCBI Taxonomy" id="205914"/>
    <lineage>
        <taxon>Bacteria</taxon>
        <taxon>Pseudomonadati</taxon>
        <taxon>Pseudomonadota</taxon>
        <taxon>Gammaproteobacteria</taxon>
        <taxon>Pasteurellales</taxon>
        <taxon>Pasteurellaceae</taxon>
        <taxon>Histophilus</taxon>
    </lineage>
</organism>
<accession>Q0I0X9</accession>
<sequence>MTQQNTTLMPREKLLKYGASSLDDKELLAIFLRTGIKNCPVMQLSELVLAHFSSLRGLINADQKHFCQMKGLGITQFVQLQACTEMTKRYLLQELQFAQEFTSPDTVRMYLQTELENKDREIFMVLFLDNQHRLIKKEEMFLGTINQANVYPREIIKTALFCNAAALILAHNHPSGVSTPSMADRKMTENIKQLSELMEIRVLDHFIIGKGNYFSFAEQGWI</sequence>
<gene>
    <name type="ordered locus">HS_0144</name>
</gene>
<keyword id="KW-0378">Hydrolase</keyword>
<keyword id="KW-0479">Metal-binding</keyword>
<keyword id="KW-0482">Metalloprotease</keyword>
<keyword id="KW-0645">Protease</keyword>
<keyword id="KW-0862">Zinc</keyword>
<dbReference type="EMBL" id="CP000436">
    <property type="protein sequence ID" value="ABI24422.1"/>
    <property type="molecule type" value="Genomic_DNA"/>
</dbReference>
<dbReference type="SMR" id="Q0I0X9"/>
<dbReference type="KEGG" id="hso:HS_0144"/>
<dbReference type="eggNOG" id="COG2003">
    <property type="taxonomic scope" value="Bacteria"/>
</dbReference>
<dbReference type="HOGENOM" id="CLU_073529_0_1_6"/>
<dbReference type="GO" id="GO:0046872">
    <property type="term" value="F:metal ion binding"/>
    <property type="evidence" value="ECO:0007669"/>
    <property type="project" value="UniProtKB-KW"/>
</dbReference>
<dbReference type="GO" id="GO:0008237">
    <property type="term" value="F:metallopeptidase activity"/>
    <property type="evidence" value="ECO:0007669"/>
    <property type="project" value="UniProtKB-KW"/>
</dbReference>
<dbReference type="GO" id="GO:0006508">
    <property type="term" value="P:proteolysis"/>
    <property type="evidence" value="ECO:0007669"/>
    <property type="project" value="UniProtKB-KW"/>
</dbReference>
<dbReference type="CDD" id="cd08071">
    <property type="entry name" value="MPN_DUF2466"/>
    <property type="match status" value="1"/>
</dbReference>
<dbReference type="Gene3D" id="3.40.140.10">
    <property type="entry name" value="Cytidine Deaminase, domain 2"/>
    <property type="match status" value="1"/>
</dbReference>
<dbReference type="InterPro" id="IPR037518">
    <property type="entry name" value="MPN"/>
</dbReference>
<dbReference type="InterPro" id="IPR025657">
    <property type="entry name" value="RadC_JAB"/>
</dbReference>
<dbReference type="InterPro" id="IPR010994">
    <property type="entry name" value="RuvA_2-like"/>
</dbReference>
<dbReference type="InterPro" id="IPR001405">
    <property type="entry name" value="UPF0758"/>
</dbReference>
<dbReference type="InterPro" id="IPR020891">
    <property type="entry name" value="UPF0758_CS"/>
</dbReference>
<dbReference type="InterPro" id="IPR046778">
    <property type="entry name" value="UPF0758_N"/>
</dbReference>
<dbReference type="NCBIfam" id="NF000642">
    <property type="entry name" value="PRK00024.1"/>
    <property type="match status" value="1"/>
</dbReference>
<dbReference type="NCBIfam" id="TIGR00608">
    <property type="entry name" value="radc"/>
    <property type="match status" value="1"/>
</dbReference>
<dbReference type="PANTHER" id="PTHR30471">
    <property type="entry name" value="DNA REPAIR PROTEIN RADC"/>
    <property type="match status" value="1"/>
</dbReference>
<dbReference type="PANTHER" id="PTHR30471:SF3">
    <property type="entry name" value="UPF0758 PROTEIN YEES-RELATED"/>
    <property type="match status" value="1"/>
</dbReference>
<dbReference type="Pfam" id="PF04002">
    <property type="entry name" value="RadC"/>
    <property type="match status" value="1"/>
</dbReference>
<dbReference type="Pfam" id="PF20582">
    <property type="entry name" value="UPF0758_N"/>
    <property type="match status" value="1"/>
</dbReference>
<dbReference type="SUPFAM" id="SSF47781">
    <property type="entry name" value="RuvA domain 2-like"/>
    <property type="match status" value="1"/>
</dbReference>
<dbReference type="PROSITE" id="PS50249">
    <property type="entry name" value="MPN"/>
    <property type="match status" value="1"/>
</dbReference>
<dbReference type="PROSITE" id="PS01302">
    <property type="entry name" value="UPF0758"/>
    <property type="match status" value="1"/>
</dbReference>
<comment type="similarity">
    <text evidence="2">Belongs to the UPF0758 family.</text>
</comment>
<proteinExistence type="inferred from homology"/>